<reference key="1">
    <citation type="submission" date="1996-11" db="EMBL/GenBank/DDBJ databases">
        <title>A novel serine protease from a Korean centipede Scolopendra.</title>
        <authorList>
            <person name="Sohn Y.-D."/>
            <person name="Park D.-H."/>
        </authorList>
    </citation>
    <scope>NUCLEOTIDE SEQUENCE [MRNA]</scope>
</reference>
<proteinExistence type="evidence at transcript level"/>
<accession>O96900</accession>
<keyword id="KW-1015">Disulfide bond</keyword>
<keyword id="KW-0378">Hydrolase</keyword>
<keyword id="KW-0645">Protease</keyword>
<keyword id="KW-0964">Secreted</keyword>
<keyword id="KW-0720">Serine protease</keyword>
<keyword id="KW-0732">Signal</keyword>
<name>VSP1_SCOSU</name>
<comment type="subcellular location">
    <subcellularLocation>
        <location evidence="1">Secreted</location>
    </subcellularLocation>
</comment>
<comment type="similarity">
    <text evidence="3">Belongs to the peptidase S1 family.</text>
</comment>
<organism>
    <name type="scientific">Scolopendra subspinipes</name>
    <name type="common">Vietnamese centipede</name>
    <dbReference type="NCBI Taxonomy" id="55038"/>
    <lineage>
        <taxon>Eukaryota</taxon>
        <taxon>Metazoa</taxon>
        <taxon>Ecdysozoa</taxon>
        <taxon>Arthropoda</taxon>
        <taxon>Myriapoda</taxon>
        <taxon>Chilopoda</taxon>
        <taxon>Pleurostigmophora</taxon>
        <taxon>Scolopendromorpha</taxon>
        <taxon>Scolopendridae</taxon>
        <taxon>Scolopendra</taxon>
    </lineage>
</organism>
<feature type="signal peptide" evidence="2">
    <location>
        <begin position="1" status="less than"/>
        <end position="18"/>
    </location>
</feature>
<feature type="propeptide" id="PRO_0000359442" evidence="2">
    <location>
        <begin position="19"/>
        <end position="35"/>
    </location>
</feature>
<feature type="chain" id="PRO_0000359443" description="Serine protease SSP1">
    <location>
        <begin position="36"/>
        <end position="286"/>
    </location>
</feature>
<feature type="domain" description="Peptidase S1" evidence="3">
    <location>
        <begin position="36"/>
        <end position="273"/>
    </location>
</feature>
<feature type="active site" description="Charge relay system" evidence="1">
    <location>
        <position position="80"/>
    </location>
</feature>
<feature type="active site" description="Charge relay system" evidence="1">
    <location>
        <position position="131"/>
    </location>
</feature>
<feature type="active site" description="Charge relay system" evidence="1">
    <location>
        <position position="223"/>
    </location>
</feature>
<feature type="disulfide bond" evidence="3">
    <location>
        <begin position="65"/>
        <end position="81"/>
    </location>
</feature>
<feature type="disulfide bond" evidence="3">
    <location>
        <begin position="196"/>
        <end position="206"/>
    </location>
</feature>
<feature type="non-terminal residue">
    <location>
        <position position="1"/>
    </location>
</feature>
<sequence length="286" mass="31146">GTRKTGILLLFLVAATTSFKLPKNESPVLISDDDRIIGGTQAYPNAYPFMVRLTTIWQNGWGGSCGRSLIXSQWVLTAAHCVYNLEKSMYWERVIVYLGDHYSQVTDAHEQVKEAADVIVHENYISSGSNDVALIKLKTPANINSYVKPGCLNSKSNDFIGQDATAAGWGLTSTIGNTISNVLMEATLPIVAPKNCPIINPPTMICTGFKREVGQDTVFKGDSGGPLFLSKNGFTILGVASFVTLDNSYPQKVTSAVFTKVSAHLSWIQENTKATDLWCAKNNHHS</sequence>
<dbReference type="EC" id="3.4.21.-"/>
<dbReference type="EMBL" id="U79522">
    <property type="protein sequence ID" value="AAD09224.1"/>
    <property type="molecule type" value="mRNA"/>
</dbReference>
<dbReference type="MEROPS" id="S01.A64"/>
<dbReference type="GO" id="GO:0005615">
    <property type="term" value="C:extracellular space"/>
    <property type="evidence" value="ECO:0007669"/>
    <property type="project" value="TreeGrafter"/>
</dbReference>
<dbReference type="GO" id="GO:0004252">
    <property type="term" value="F:serine-type endopeptidase activity"/>
    <property type="evidence" value="ECO:0007669"/>
    <property type="project" value="InterPro"/>
</dbReference>
<dbReference type="GO" id="GO:0006508">
    <property type="term" value="P:proteolysis"/>
    <property type="evidence" value="ECO:0007669"/>
    <property type="project" value="UniProtKB-KW"/>
</dbReference>
<dbReference type="CDD" id="cd00190">
    <property type="entry name" value="Tryp_SPc"/>
    <property type="match status" value="1"/>
</dbReference>
<dbReference type="FunFam" id="2.40.10.10:FF:000166">
    <property type="entry name" value="Trypsin"/>
    <property type="match status" value="1"/>
</dbReference>
<dbReference type="Gene3D" id="2.40.10.10">
    <property type="entry name" value="Trypsin-like serine proteases"/>
    <property type="match status" value="1"/>
</dbReference>
<dbReference type="InterPro" id="IPR009003">
    <property type="entry name" value="Peptidase_S1_PA"/>
</dbReference>
<dbReference type="InterPro" id="IPR043504">
    <property type="entry name" value="Peptidase_S1_PA_chymotrypsin"/>
</dbReference>
<dbReference type="InterPro" id="IPR001314">
    <property type="entry name" value="Peptidase_S1A"/>
</dbReference>
<dbReference type="InterPro" id="IPR050127">
    <property type="entry name" value="Serine_Proteases_S1"/>
</dbReference>
<dbReference type="InterPro" id="IPR001254">
    <property type="entry name" value="Trypsin_dom"/>
</dbReference>
<dbReference type="InterPro" id="IPR018114">
    <property type="entry name" value="TRYPSIN_HIS"/>
</dbReference>
<dbReference type="InterPro" id="IPR033116">
    <property type="entry name" value="TRYPSIN_SER"/>
</dbReference>
<dbReference type="PANTHER" id="PTHR24264:SF65">
    <property type="entry name" value="SRCR DOMAIN-CONTAINING PROTEIN"/>
    <property type="match status" value="1"/>
</dbReference>
<dbReference type="PANTHER" id="PTHR24264">
    <property type="entry name" value="TRYPSIN-RELATED"/>
    <property type="match status" value="1"/>
</dbReference>
<dbReference type="Pfam" id="PF00089">
    <property type="entry name" value="Trypsin"/>
    <property type="match status" value="1"/>
</dbReference>
<dbReference type="PRINTS" id="PR00722">
    <property type="entry name" value="CHYMOTRYPSIN"/>
</dbReference>
<dbReference type="SMART" id="SM00020">
    <property type="entry name" value="Tryp_SPc"/>
    <property type="match status" value="1"/>
</dbReference>
<dbReference type="SUPFAM" id="SSF50494">
    <property type="entry name" value="Trypsin-like serine proteases"/>
    <property type="match status" value="1"/>
</dbReference>
<dbReference type="PROSITE" id="PS50240">
    <property type="entry name" value="TRYPSIN_DOM"/>
    <property type="match status" value="1"/>
</dbReference>
<dbReference type="PROSITE" id="PS00134">
    <property type="entry name" value="TRYPSIN_HIS"/>
    <property type="match status" value="1"/>
</dbReference>
<dbReference type="PROSITE" id="PS00135">
    <property type="entry name" value="TRYPSIN_SER"/>
    <property type="match status" value="1"/>
</dbReference>
<protein>
    <recommendedName>
        <fullName>Serine protease SSP1</fullName>
        <ecNumber>3.4.21.-</ecNumber>
    </recommendedName>
</protein>
<evidence type="ECO:0000250" key="1"/>
<evidence type="ECO:0000255" key="2"/>
<evidence type="ECO:0000255" key="3">
    <source>
        <dbReference type="PROSITE-ProRule" id="PRU00274"/>
    </source>
</evidence>